<evidence type="ECO:0000250" key="1"/>
<evidence type="ECO:0000250" key="2">
    <source>
        <dbReference type="UniProtKB" id="P56747"/>
    </source>
</evidence>
<evidence type="ECO:0000255" key="3"/>
<evidence type="ECO:0000269" key="4">
    <source>
    </source>
</evidence>
<evidence type="ECO:0000269" key="5">
    <source>
    </source>
</evidence>
<evidence type="ECO:0000305" key="6"/>
<reference key="1">
    <citation type="journal article" date="1999" name="Proc. Natl. Acad. Sci. U.S.A.">
        <title>Claudin multigene family encoding four-transmembrane domain protein components of tight junction strands.</title>
        <authorList>
            <person name="Morita K."/>
            <person name="Furuse M."/>
            <person name="Fujimoto K."/>
            <person name="Tsukita S."/>
        </authorList>
    </citation>
    <scope>NUCLEOTIDE SEQUENCE [MRNA]</scope>
    <scope>SUBCELLULAR LOCATION</scope>
    <scope>TISSUE SPECIFICITY</scope>
</reference>
<reference key="2">
    <citation type="submission" date="1999-02" db="EMBL/GenBank/DDBJ databases">
        <title>Skullin: a novel membrane molecule marks formation of epithelium.</title>
        <authorList>
            <person name="Troy T."/>
            <person name="Wisco V."/>
            <person name="Turksen K."/>
        </authorList>
    </citation>
    <scope>NUCLEOTIDE SEQUENCE [MRNA]</scope>
    <source>
        <tissue>Embryonic stem cell</tissue>
    </source>
</reference>
<reference key="3">
    <citation type="journal article" date="2005" name="Science">
        <title>The transcriptional landscape of the mammalian genome.</title>
        <authorList>
            <person name="Carninci P."/>
            <person name="Kasukawa T."/>
            <person name="Katayama S."/>
            <person name="Gough J."/>
            <person name="Frith M.C."/>
            <person name="Maeda N."/>
            <person name="Oyama R."/>
            <person name="Ravasi T."/>
            <person name="Lenhard B."/>
            <person name="Wells C."/>
            <person name="Kodzius R."/>
            <person name="Shimokawa K."/>
            <person name="Bajic V.B."/>
            <person name="Brenner S.E."/>
            <person name="Batalov S."/>
            <person name="Forrest A.R."/>
            <person name="Zavolan M."/>
            <person name="Davis M.J."/>
            <person name="Wilming L.G."/>
            <person name="Aidinis V."/>
            <person name="Allen J.E."/>
            <person name="Ambesi-Impiombato A."/>
            <person name="Apweiler R."/>
            <person name="Aturaliya R.N."/>
            <person name="Bailey T.L."/>
            <person name="Bansal M."/>
            <person name="Baxter L."/>
            <person name="Beisel K.W."/>
            <person name="Bersano T."/>
            <person name="Bono H."/>
            <person name="Chalk A.M."/>
            <person name="Chiu K.P."/>
            <person name="Choudhary V."/>
            <person name="Christoffels A."/>
            <person name="Clutterbuck D.R."/>
            <person name="Crowe M.L."/>
            <person name="Dalla E."/>
            <person name="Dalrymple B.P."/>
            <person name="de Bono B."/>
            <person name="Della Gatta G."/>
            <person name="di Bernardo D."/>
            <person name="Down T."/>
            <person name="Engstrom P."/>
            <person name="Fagiolini M."/>
            <person name="Faulkner G."/>
            <person name="Fletcher C.F."/>
            <person name="Fukushima T."/>
            <person name="Furuno M."/>
            <person name="Futaki S."/>
            <person name="Gariboldi M."/>
            <person name="Georgii-Hemming P."/>
            <person name="Gingeras T.R."/>
            <person name="Gojobori T."/>
            <person name="Green R.E."/>
            <person name="Gustincich S."/>
            <person name="Harbers M."/>
            <person name="Hayashi Y."/>
            <person name="Hensch T.K."/>
            <person name="Hirokawa N."/>
            <person name="Hill D."/>
            <person name="Huminiecki L."/>
            <person name="Iacono M."/>
            <person name="Ikeo K."/>
            <person name="Iwama A."/>
            <person name="Ishikawa T."/>
            <person name="Jakt M."/>
            <person name="Kanapin A."/>
            <person name="Katoh M."/>
            <person name="Kawasawa Y."/>
            <person name="Kelso J."/>
            <person name="Kitamura H."/>
            <person name="Kitano H."/>
            <person name="Kollias G."/>
            <person name="Krishnan S.P."/>
            <person name="Kruger A."/>
            <person name="Kummerfeld S.K."/>
            <person name="Kurochkin I.V."/>
            <person name="Lareau L.F."/>
            <person name="Lazarevic D."/>
            <person name="Lipovich L."/>
            <person name="Liu J."/>
            <person name="Liuni S."/>
            <person name="McWilliam S."/>
            <person name="Madan Babu M."/>
            <person name="Madera M."/>
            <person name="Marchionni L."/>
            <person name="Matsuda H."/>
            <person name="Matsuzawa S."/>
            <person name="Miki H."/>
            <person name="Mignone F."/>
            <person name="Miyake S."/>
            <person name="Morris K."/>
            <person name="Mottagui-Tabar S."/>
            <person name="Mulder N."/>
            <person name="Nakano N."/>
            <person name="Nakauchi H."/>
            <person name="Ng P."/>
            <person name="Nilsson R."/>
            <person name="Nishiguchi S."/>
            <person name="Nishikawa S."/>
            <person name="Nori F."/>
            <person name="Ohara O."/>
            <person name="Okazaki Y."/>
            <person name="Orlando V."/>
            <person name="Pang K.C."/>
            <person name="Pavan W.J."/>
            <person name="Pavesi G."/>
            <person name="Pesole G."/>
            <person name="Petrovsky N."/>
            <person name="Piazza S."/>
            <person name="Reed J."/>
            <person name="Reid J.F."/>
            <person name="Ring B.Z."/>
            <person name="Ringwald M."/>
            <person name="Rost B."/>
            <person name="Ruan Y."/>
            <person name="Salzberg S.L."/>
            <person name="Sandelin A."/>
            <person name="Schneider C."/>
            <person name="Schoenbach C."/>
            <person name="Sekiguchi K."/>
            <person name="Semple C.A."/>
            <person name="Seno S."/>
            <person name="Sessa L."/>
            <person name="Sheng Y."/>
            <person name="Shibata Y."/>
            <person name="Shimada H."/>
            <person name="Shimada K."/>
            <person name="Silva D."/>
            <person name="Sinclair B."/>
            <person name="Sperling S."/>
            <person name="Stupka E."/>
            <person name="Sugiura K."/>
            <person name="Sultana R."/>
            <person name="Takenaka Y."/>
            <person name="Taki K."/>
            <person name="Tammoja K."/>
            <person name="Tan S.L."/>
            <person name="Tang S."/>
            <person name="Taylor M.S."/>
            <person name="Tegner J."/>
            <person name="Teichmann S.A."/>
            <person name="Ueda H.R."/>
            <person name="van Nimwegen E."/>
            <person name="Verardo R."/>
            <person name="Wei C.L."/>
            <person name="Yagi K."/>
            <person name="Yamanishi H."/>
            <person name="Zabarovsky E."/>
            <person name="Zhu S."/>
            <person name="Zimmer A."/>
            <person name="Hide W."/>
            <person name="Bult C."/>
            <person name="Grimmond S.M."/>
            <person name="Teasdale R.D."/>
            <person name="Liu E.T."/>
            <person name="Brusic V."/>
            <person name="Quackenbush J."/>
            <person name="Wahlestedt C."/>
            <person name="Mattick J.S."/>
            <person name="Hume D.A."/>
            <person name="Kai C."/>
            <person name="Sasaki D."/>
            <person name="Tomaru Y."/>
            <person name="Fukuda S."/>
            <person name="Kanamori-Katayama M."/>
            <person name="Suzuki M."/>
            <person name="Aoki J."/>
            <person name="Arakawa T."/>
            <person name="Iida J."/>
            <person name="Imamura K."/>
            <person name="Itoh M."/>
            <person name="Kato T."/>
            <person name="Kawaji H."/>
            <person name="Kawagashira N."/>
            <person name="Kawashima T."/>
            <person name="Kojima M."/>
            <person name="Kondo S."/>
            <person name="Konno H."/>
            <person name="Nakano K."/>
            <person name="Ninomiya N."/>
            <person name="Nishio T."/>
            <person name="Okada M."/>
            <person name="Plessy C."/>
            <person name="Shibata K."/>
            <person name="Shiraki T."/>
            <person name="Suzuki S."/>
            <person name="Tagami M."/>
            <person name="Waki K."/>
            <person name="Watahiki A."/>
            <person name="Okamura-Oho Y."/>
            <person name="Suzuki H."/>
            <person name="Kawai J."/>
            <person name="Hayashizaki Y."/>
        </authorList>
    </citation>
    <scope>NUCLEOTIDE SEQUENCE [LARGE SCALE MRNA]</scope>
    <source>
        <strain>C57BL/6J</strain>
    </source>
</reference>
<reference key="4">
    <citation type="journal article" date="2004" name="Genome Res.">
        <title>The status, quality, and expansion of the NIH full-length cDNA project: the Mammalian Gene Collection (MGC).</title>
        <authorList>
            <consortium name="The MGC Project Team"/>
        </authorList>
    </citation>
    <scope>NUCLEOTIDE SEQUENCE [LARGE SCALE MRNA]</scope>
</reference>
<reference key="5">
    <citation type="journal article" date="1999" name="J. Cell Biol.">
        <title>Direct binding of three tight junction-associated MAGUKs, ZO-1, ZO-2, and ZO-3, with the COOH termini of claudins.</title>
        <authorList>
            <person name="Itoh M."/>
            <person name="Furuse M."/>
            <person name="Morita K."/>
            <person name="Kubota K."/>
            <person name="Saitou M."/>
            <person name="Tsukita S."/>
        </authorList>
    </citation>
    <scope>INTERACTION WITH TJP1; TJP2 AND TJP3</scope>
</reference>
<name>CLD6_MOUSE</name>
<gene>
    <name type="primary">Cldn6</name>
</gene>
<accession>Q9Z262</accession>
<feature type="chain" id="PRO_0000144749" description="Claudin-6">
    <location>
        <begin position="1"/>
        <end position="219"/>
    </location>
</feature>
<feature type="topological domain" description="Cytoplasmic" evidence="3">
    <location>
        <begin position="1"/>
        <end position="7"/>
    </location>
</feature>
<feature type="transmembrane region" description="Helical" evidence="3">
    <location>
        <begin position="8"/>
        <end position="28"/>
    </location>
</feature>
<feature type="topological domain" description="Extracellular" evidence="3">
    <location>
        <begin position="29"/>
        <end position="81"/>
    </location>
</feature>
<feature type="transmembrane region" description="Helical" evidence="3">
    <location>
        <begin position="82"/>
        <end position="102"/>
    </location>
</feature>
<feature type="topological domain" description="Cytoplasmic" evidence="3">
    <location>
        <begin position="103"/>
        <end position="116"/>
    </location>
</feature>
<feature type="transmembrane region" description="Helical" evidence="3">
    <location>
        <begin position="117"/>
        <end position="137"/>
    </location>
</feature>
<feature type="topological domain" description="Extracellular" evidence="3">
    <location>
        <begin position="138"/>
        <end position="163"/>
    </location>
</feature>
<feature type="transmembrane region" description="Helical" evidence="3">
    <location>
        <begin position="164"/>
        <end position="184"/>
    </location>
</feature>
<feature type="topological domain" description="Cytoplasmic" evidence="3">
    <location>
        <begin position="185"/>
        <end position="219"/>
    </location>
</feature>
<feature type="region of interest" description="Interactions with TJP1, TJP2 and TJP3" evidence="1">
    <location>
        <begin position="218"/>
        <end position="219"/>
    </location>
</feature>
<feature type="modified residue" description="Phosphoserine" evidence="2">
    <location>
        <position position="201"/>
    </location>
</feature>
<feature type="modified residue" description="Phosphoserine" evidence="2">
    <location>
        <position position="203"/>
    </location>
</feature>
<feature type="modified residue" description="Phosphoserine" evidence="2">
    <location>
        <position position="207"/>
    </location>
</feature>
<feature type="modified residue" description="Phosphoserine" evidence="2">
    <location>
        <position position="211"/>
    </location>
</feature>
<feature type="sequence conflict" description="In Ref. 2; AAK02012." evidence="6" ref="2">
    <original>A</original>
    <variation>T</variation>
    <location>
        <position position="34"/>
    </location>
</feature>
<comment type="function">
    <text evidence="1">Plays a major role in tight junction-specific obliteration of the intercellular space, through calcium-independent cell-adhesion activity.</text>
</comment>
<comment type="subunit">
    <text evidence="2 4">Directly interacts with TJP1/ZO-1, TJP2/ZO-2 and TJP3/ZO-3 (PubMed:10601346). Interacts with CLDN1, CD81 and OCLN (By similarity).</text>
</comment>
<comment type="subcellular location">
    <subcellularLocation>
        <location evidence="5">Cell junction</location>
        <location evidence="5">Tight junction</location>
    </subcellularLocation>
    <subcellularLocation>
        <location evidence="5">Cell membrane</location>
        <topology evidence="5">Multi-pass membrane protein</topology>
    </subcellularLocation>
</comment>
<comment type="tissue specificity">
    <text evidence="5">Expressed mostly in embryonic tissues.</text>
</comment>
<comment type="similarity">
    <text evidence="6">Belongs to the claudin family.</text>
</comment>
<protein>
    <recommendedName>
        <fullName>Claudin-6</fullName>
    </recommendedName>
    <alternativeName>
        <fullName>Skullin</fullName>
    </alternativeName>
</protein>
<keyword id="KW-0965">Cell junction</keyword>
<keyword id="KW-1003">Cell membrane</keyword>
<keyword id="KW-0472">Membrane</keyword>
<keyword id="KW-0597">Phosphoprotein</keyword>
<keyword id="KW-1185">Reference proteome</keyword>
<keyword id="KW-0796">Tight junction</keyword>
<keyword id="KW-0812">Transmembrane</keyword>
<keyword id="KW-1133">Transmembrane helix</keyword>
<organism>
    <name type="scientific">Mus musculus</name>
    <name type="common">Mouse</name>
    <dbReference type="NCBI Taxonomy" id="10090"/>
    <lineage>
        <taxon>Eukaryota</taxon>
        <taxon>Metazoa</taxon>
        <taxon>Chordata</taxon>
        <taxon>Craniata</taxon>
        <taxon>Vertebrata</taxon>
        <taxon>Euteleostomi</taxon>
        <taxon>Mammalia</taxon>
        <taxon>Eutheria</taxon>
        <taxon>Euarchontoglires</taxon>
        <taxon>Glires</taxon>
        <taxon>Rodentia</taxon>
        <taxon>Myomorpha</taxon>
        <taxon>Muroidea</taxon>
        <taxon>Muridae</taxon>
        <taxon>Murinae</taxon>
        <taxon>Mus</taxon>
        <taxon>Mus</taxon>
    </lineage>
</organism>
<proteinExistence type="evidence at protein level"/>
<dbReference type="EMBL" id="AF087824">
    <property type="protein sequence ID" value="AAD09759.1"/>
    <property type="molecule type" value="mRNA"/>
</dbReference>
<dbReference type="EMBL" id="AF125305">
    <property type="protein sequence ID" value="AAK02012.1"/>
    <property type="molecule type" value="mRNA"/>
</dbReference>
<dbReference type="EMBL" id="AK010560">
    <property type="protein sequence ID" value="BAB27028.1"/>
    <property type="molecule type" value="mRNA"/>
</dbReference>
<dbReference type="EMBL" id="AK010682">
    <property type="protein sequence ID" value="BAB27114.1"/>
    <property type="molecule type" value="mRNA"/>
</dbReference>
<dbReference type="EMBL" id="BC005718">
    <property type="protein sequence ID" value="AAH05718.1"/>
    <property type="molecule type" value="mRNA"/>
</dbReference>
<dbReference type="CCDS" id="CCDS28457.1"/>
<dbReference type="RefSeq" id="NP_001400943.1">
    <property type="nucleotide sequence ID" value="NM_001414014.1"/>
</dbReference>
<dbReference type="RefSeq" id="NP_061247.1">
    <property type="nucleotide sequence ID" value="NM_018777.5"/>
</dbReference>
<dbReference type="RefSeq" id="XP_006524704.1">
    <property type="nucleotide sequence ID" value="XM_006524641.1"/>
</dbReference>
<dbReference type="SMR" id="Q9Z262"/>
<dbReference type="FunCoup" id="Q9Z262">
    <property type="interactions" value="264"/>
</dbReference>
<dbReference type="MINT" id="Q9Z262"/>
<dbReference type="STRING" id="10090.ENSMUSP00000024699"/>
<dbReference type="iPTMnet" id="Q9Z262"/>
<dbReference type="PhosphoSitePlus" id="Q9Z262"/>
<dbReference type="PaxDb" id="10090-ENSMUSP00000024699"/>
<dbReference type="ProteomicsDB" id="283379"/>
<dbReference type="Antibodypedia" id="23973">
    <property type="antibodies" value="599 antibodies from 31 providers"/>
</dbReference>
<dbReference type="DNASU" id="54419"/>
<dbReference type="Ensembl" id="ENSMUST00000024699.4">
    <property type="protein sequence ID" value="ENSMUSP00000024699.3"/>
    <property type="gene ID" value="ENSMUSG00000023906.4"/>
</dbReference>
<dbReference type="Ensembl" id="ENSMUST00000232719.2">
    <property type="protein sequence ID" value="ENSMUSP00000156498.2"/>
    <property type="gene ID" value="ENSMUSG00000023906.4"/>
</dbReference>
<dbReference type="Ensembl" id="ENSMUST00000233364.2">
    <property type="protein sequence ID" value="ENSMUSP00000156806.2"/>
    <property type="gene ID" value="ENSMUSG00000023906.4"/>
</dbReference>
<dbReference type="GeneID" id="54419"/>
<dbReference type="KEGG" id="mmu:54419"/>
<dbReference type="UCSC" id="uc008asw.3">
    <property type="organism name" value="mouse"/>
</dbReference>
<dbReference type="AGR" id="MGI:1859284"/>
<dbReference type="CTD" id="9074"/>
<dbReference type="MGI" id="MGI:1859284">
    <property type="gene designation" value="Cldn6"/>
</dbReference>
<dbReference type="VEuPathDB" id="HostDB:ENSMUSG00000023906"/>
<dbReference type="eggNOG" id="ENOG502QSCN">
    <property type="taxonomic scope" value="Eukaryota"/>
</dbReference>
<dbReference type="GeneTree" id="ENSGT00940000163060"/>
<dbReference type="HOGENOM" id="CLU_076370_1_2_1"/>
<dbReference type="InParanoid" id="Q9Z262"/>
<dbReference type="OMA" id="NHYMARY"/>
<dbReference type="OrthoDB" id="8830244at2759"/>
<dbReference type="PhylomeDB" id="Q9Z262"/>
<dbReference type="TreeFam" id="TF331936"/>
<dbReference type="BioGRID-ORCS" id="54419">
    <property type="hits" value="3 hits in 82 CRISPR screens"/>
</dbReference>
<dbReference type="ChiTaRS" id="Cldn6">
    <property type="organism name" value="mouse"/>
</dbReference>
<dbReference type="PRO" id="PR:Q9Z262"/>
<dbReference type="Proteomes" id="UP000000589">
    <property type="component" value="Chromosome 17"/>
</dbReference>
<dbReference type="RNAct" id="Q9Z262">
    <property type="molecule type" value="protein"/>
</dbReference>
<dbReference type="Bgee" id="ENSMUSG00000023906">
    <property type="expression patterns" value="Expressed in yolk sac and 120 other cell types or tissues"/>
</dbReference>
<dbReference type="ExpressionAtlas" id="Q9Z262">
    <property type="expression patterns" value="baseline and differential"/>
</dbReference>
<dbReference type="GO" id="GO:0016327">
    <property type="term" value="C:apicolateral plasma membrane"/>
    <property type="evidence" value="ECO:0000314"/>
    <property type="project" value="UniProtKB"/>
</dbReference>
<dbReference type="GO" id="GO:0005923">
    <property type="term" value="C:bicellular tight junction"/>
    <property type="evidence" value="ECO:0000314"/>
    <property type="project" value="UniProtKB"/>
</dbReference>
<dbReference type="GO" id="GO:0016020">
    <property type="term" value="C:membrane"/>
    <property type="evidence" value="ECO:0000303"/>
    <property type="project" value="UniProtKB"/>
</dbReference>
<dbReference type="GO" id="GO:0005886">
    <property type="term" value="C:plasma membrane"/>
    <property type="evidence" value="ECO:0000314"/>
    <property type="project" value="MGI"/>
</dbReference>
<dbReference type="GO" id="GO:0042802">
    <property type="term" value="F:identical protein binding"/>
    <property type="evidence" value="ECO:0000250"/>
    <property type="project" value="UniProtKB"/>
</dbReference>
<dbReference type="GO" id="GO:0005198">
    <property type="term" value="F:structural molecule activity"/>
    <property type="evidence" value="ECO:0007669"/>
    <property type="project" value="InterPro"/>
</dbReference>
<dbReference type="GO" id="GO:0001618">
    <property type="term" value="F:virus receptor activity"/>
    <property type="evidence" value="ECO:0007669"/>
    <property type="project" value="Ensembl"/>
</dbReference>
<dbReference type="GO" id="GO:0016338">
    <property type="term" value="P:calcium-independent cell-cell adhesion via plasma membrane cell-adhesion molecules"/>
    <property type="evidence" value="ECO:0000250"/>
    <property type="project" value="UniProtKB"/>
</dbReference>
<dbReference type="GO" id="GO:0045216">
    <property type="term" value="P:cell-cell junction organization"/>
    <property type="evidence" value="ECO:0000314"/>
    <property type="project" value="MGI"/>
</dbReference>
<dbReference type="FunFam" id="1.20.140.150:FF:000001">
    <property type="entry name" value="Claudin"/>
    <property type="match status" value="1"/>
</dbReference>
<dbReference type="Gene3D" id="1.20.140.150">
    <property type="match status" value="1"/>
</dbReference>
<dbReference type="InterPro" id="IPR006187">
    <property type="entry name" value="Claudin"/>
</dbReference>
<dbReference type="InterPro" id="IPR003925">
    <property type="entry name" value="Claudin6"/>
</dbReference>
<dbReference type="InterPro" id="IPR017974">
    <property type="entry name" value="Claudin_CS"/>
</dbReference>
<dbReference type="InterPro" id="IPR004031">
    <property type="entry name" value="PMP22/EMP/MP20/Claudin"/>
</dbReference>
<dbReference type="PANTHER" id="PTHR12002">
    <property type="entry name" value="CLAUDIN"/>
    <property type="match status" value="1"/>
</dbReference>
<dbReference type="Pfam" id="PF00822">
    <property type="entry name" value="PMP22_Claudin"/>
    <property type="match status" value="1"/>
</dbReference>
<dbReference type="PRINTS" id="PR01077">
    <property type="entry name" value="CLAUDIN"/>
</dbReference>
<dbReference type="PRINTS" id="PR01445">
    <property type="entry name" value="CLAUDIN6"/>
</dbReference>
<dbReference type="PROSITE" id="PS01346">
    <property type="entry name" value="CLAUDIN"/>
    <property type="match status" value="1"/>
</dbReference>
<sequence length="219" mass="23388">MASTGLQILGIVLTLLGWVNALVSCALPMWKVTAFIGNSIVVAQMVWEGLWMSCVVQSTGQMQCKVYDSLLALPQDLQAARALCVVTLLIVLLGLLVYLAGAKCTTCVEDRNSKSRLVLISGIIFVISGVLTLIPVCWTAHSIIQDFYNPLVADAQKRELGASLYLGWAASGLLLLGGGLLCCACSSGGTQGPRHYMACYSTSVPHSRGPSEYPTKNYV</sequence>